<protein>
    <recommendedName>
        <fullName evidence="1">Exodeoxyribonuclease 7 small subunit</fullName>
        <ecNumber evidence="1">3.1.11.6</ecNumber>
    </recommendedName>
    <alternativeName>
        <fullName evidence="1">Exodeoxyribonuclease VII small subunit</fullName>
        <shortName evidence="1">Exonuclease VII small subunit</shortName>
    </alternativeName>
</protein>
<evidence type="ECO:0000255" key="1">
    <source>
        <dbReference type="HAMAP-Rule" id="MF_00337"/>
    </source>
</evidence>
<organism>
    <name type="scientific">Heliobacterium modesticaldum (strain ATCC 51547 / Ice1)</name>
    <dbReference type="NCBI Taxonomy" id="498761"/>
    <lineage>
        <taxon>Bacteria</taxon>
        <taxon>Bacillati</taxon>
        <taxon>Bacillota</taxon>
        <taxon>Clostridia</taxon>
        <taxon>Eubacteriales</taxon>
        <taxon>Heliobacteriaceae</taxon>
        <taxon>Heliomicrobium</taxon>
    </lineage>
</organism>
<accession>B0TEJ2</accession>
<gene>
    <name evidence="1" type="primary">xseB</name>
    <name type="ordered locus">Helmi_04730</name>
    <name type="ORF">HM1_0292</name>
</gene>
<reference key="1">
    <citation type="journal article" date="2008" name="J. Bacteriol.">
        <title>The genome of Heliobacterium modesticaldum, a phototrophic representative of the Firmicutes containing the simplest photosynthetic apparatus.</title>
        <authorList>
            <person name="Sattley W.M."/>
            <person name="Madigan M.T."/>
            <person name="Swingley W.D."/>
            <person name="Cheung P.C."/>
            <person name="Clocksin K.M."/>
            <person name="Conrad A.L."/>
            <person name="Dejesa L.C."/>
            <person name="Honchak B.M."/>
            <person name="Jung D.O."/>
            <person name="Karbach L.E."/>
            <person name="Kurdoglu A."/>
            <person name="Lahiri S."/>
            <person name="Mastrian S.D."/>
            <person name="Page L.E."/>
            <person name="Taylor H.L."/>
            <person name="Wang Z.T."/>
            <person name="Raymond J."/>
            <person name="Chen M."/>
            <person name="Blankenship R.E."/>
            <person name="Touchman J.W."/>
        </authorList>
    </citation>
    <scope>NUCLEOTIDE SEQUENCE [LARGE SCALE GENOMIC DNA]</scope>
    <source>
        <strain>ATCC 51547 / Ice1</strain>
    </source>
</reference>
<feature type="chain" id="PRO_1000200255" description="Exodeoxyribonuclease 7 small subunit">
    <location>
        <begin position="1"/>
        <end position="83"/>
    </location>
</feature>
<proteinExistence type="inferred from homology"/>
<dbReference type="EC" id="3.1.11.6" evidence="1"/>
<dbReference type="EMBL" id="CP000930">
    <property type="protein sequence ID" value="ABZ82911.1"/>
    <property type="molecule type" value="Genomic_DNA"/>
</dbReference>
<dbReference type="RefSeq" id="WP_012281641.1">
    <property type="nucleotide sequence ID" value="NC_010337.2"/>
</dbReference>
<dbReference type="SMR" id="B0TEJ2"/>
<dbReference type="STRING" id="498761.HM1_0292"/>
<dbReference type="KEGG" id="hmo:HM1_0292"/>
<dbReference type="eggNOG" id="COG1722">
    <property type="taxonomic scope" value="Bacteria"/>
</dbReference>
<dbReference type="HOGENOM" id="CLU_145918_3_4_9"/>
<dbReference type="Proteomes" id="UP000008550">
    <property type="component" value="Chromosome"/>
</dbReference>
<dbReference type="GO" id="GO:0005829">
    <property type="term" value="C:cytosol"/>
    <property type="evidence" value="ECO:0007669"/>
    <property type="project" value="TreeGrafter"/>
</dbReference>
<dbReference type="GO" id="GO:0009318">
    <property type="term" value="C:exodeoxyribonuclease VII complex"/>
    <property type="evidence" value="ECO:0007669"/>
    <property type="project" value="InterPro"/>
</dbReference>
<dbReference type="GO" id="GO:0008855">
    <property type="term" value="F:exodeoxyribonuclease VII activity"/>
    <property type="evidence" value="ECO:0007669"/>
    <property type="project" value="UniProtKB-UniRule"/>
</dbReference>
<dbReference type="GO" id="GO:0006308">
    <property type="term" value="P:DNA catabolic process"/>
    <property type="evidence" value="ECO:0007669"/>
    <property type="project" value="UniProtKB-UniRule"/>
</dbReference>
<dbReference type="Gene3D" id="1.10.287.1040">
    <property type="entry name" value="Exonuclease VII, small subunit"/>
    <property type="match status" value="1"/>
</dbReference>
<dbReference type="HAMAP" id="MF_00337">
    <property type="entry name" value="Exonuc_7_S"/>
    <property type="match status" value="1"/>
</dbReference>
<dbReference type="InterPro" id="IPR003761">
    <property type="entry name" value="Exonuc_VII_S"/>
</dbReference>
<dbReference type="InterPro" id="IPR037004">
    <property type="entry name" value="Exonuc_VII_ssu_sf"/>
</dbReference>
<dbReference type="NCBIfam" id="TIGR01280">
    <property type="entry name" value="xseB"/>
    <property type="match status" value="1"/>
</dbReference>
<dbReference type="PANTHER" id="PTHR34137">
    <property type="entry name" value="EXODEOXYRIBONUCLEASE 7 SMALL SUBUNIT"/>
    <property type="match status" value="1"/>
</dbReference>
<dbReference type="PANTHER" id="PTHR34137:SF1">
    <property type="entry name" value="EXODEOXYRIBONUCLEASE 7 SMALL SUBUNIT"/>
    <property type="match status" value="1"/>
</dbReference>
<dbReference type="Pfam" id="PF02609">
    <property type="entry name" value="Exonuc_VII_S"/>
    <property type="match status" value="1"/>
</dbReference>
<dbReference type="PIRSF" id="PIRSF006488">
    <property type="entry name" value="Exonuc_VII_S"/>
    <property type="match status" value="1"/>
</dbReference>
<dbReference type="SUPFAM" id="SSF116842">
    <property type="entry name" value="XseB-like"/>
    <property type="match status" value="1"/>
</dbReference>
<name>EX7S_HELMI</name>
<keyword id="KW-0963">Cytoplasm</keyword>
<keyword id="KW-0269">Exonuclease</keyword>
<keyword id="KW-0378">Hydrolase</keyword>
<keyword id="KW-0540">Nuclease</keyword>
<keyword id="KW-1185">Reference proteome</keyword>
<sequence>MAKGKANLNLTYEAAIGRLEEVVRSLETGEASLDESLKLFQEGIGLVRHCHSQLDAYEAKVQRLIETPDGAAVVEERRTEEGE</sequence>
<comment type="function">
    <text evidence="1">Bidirectionally degrades single-stranded DNA into large acid-insoluble oligonucleotides, which are then degraded further into small acid-soluble oligonucleotides.</text>
</comment>
<comment type="catalytic activity">
    <reaction evidence="1">
        <text>Exonucleolytic cleavage in either 5'- to 3'- or 3'- to 5'-direction to yield nucleoside 5'-phosphates.</text>
        <dbReference type="EC" id="3.1.11.6"/>
    </reaction>
</comment>
<comment type="subunit">
    <text evidence="1">Heterooligomer composed of large and small subunits.</text>
</comment>
<comment type="subcellular location">
    <subcellularLocation>
        <location evidence="1">Cytoplasm</location>
    </subcellularLocation>
</comment>
<comment type="similarity">
    <text evidence="1">Belongs to the XseB family.</text>
</comment>